<keyword id="KW-0028">Amino-acid biosynthesis</keyword>
<keyword id="KW-0963">Cytoplasm</keyword>
<keyword id="KW-0554">One-carbon metabolism</keyword>
<keyword id="KW-0663">Pyridoxal phosphate</keyword>
<keyword id="KW-1185">Reference proteome</keyword>
<keyword id="KW-0808">Transferase</keyword>
<sequence>MFPRDARLDMYDPELAKAIAAEVRRQEDHVELIASENYCSTLVMQVQGSQLTNKYAEGYSGKRYYGGCEYVDIAEQLAIERAKKLFGADYANVQPHSGSQANQAVYFALLQPGDTILGMSLAHGGHLTHGANVNVSGKLFNAVQYGVNAQGLIDYEAVESLALEHRPKMVVAGFSAYSQKIDWARFRAIADQVGAYLLVDMAHVAGLVAAGVYPSPLPHAHVVTSTTHKTLRGPRGGIIVAQAPQEALVKKLQSIVFPGIQGGPLMHVIAAKAVAFKEALEPAFKVYQQQVVKNAKAMAGTLMLRGYKIVSGGTENHLMLVDMIGRDVSGKDAEGALGQVHITVNKNAVPDDPRSPFVTSGLRLGTPAVTTRGYQEQDCVDLAHWIADVLDAPADVTVIAAVREKVAAQCKKYPVYR</sequence>
<organism>
    <name type="scientific">Xylella fastidiosa (strain Temecula1 / ATCC 700964)</name>
    <dbReference type="NCBI Taxonomy" id="183190"/>
    <lineage>
        <taxon>Bacteria</taxon>
        <taxon>Pseudomonadati</taxon>
        <taxon>Pseudomonadota</taxon>
        <taxon>Gammaproteobacteria</taxon>
        <taxon>Lysobacterales</taxon>
        <taxon>Lysobacteraceae</taxon>
        <taxon>Xylella</taxon>
    </lineage>
</organism>
<accession>Q87AS2</accession>
<comment type="function">
    <text evidence="1">Catalyzes the reversible interconversion of serine and glycine with tetrahydrofolate (THF) serving as the one-carbon carrier. This reaction serves as the major source of one-carbon groups required for the biosynthesis of purines, thymidylate, methionine, and other important biomolecules. Also exhibits THF-independent aldolase activity toward beta-hydroxyamino acids, producing glycine and aldehydes, via a retro-aldol mechanism.</text>
</comment>
<comment type="catalytic activity">
    <reaction evidence="1">
        <text>(6R)-5,10-methylene-5,6,7,8-tetrahydrofolate + glycine + H2O = (6S)-5,6,7,8-tetrahydrofolate + L-serine</text>
        <dbReference type="Rhea" id="RHEA:15481"/>
        <dbReference type="ChEBI" id="CHEBI:15377"/>
        <dbReference type="ChEBI" id="CHEBI:15636"/>
        <dbReference type="ChEBI" id="CHEBI:33384"/>
        <dbReference type="ChEBI" id="CHEBI:57305"/>
        <dbReference type="ChEBI" id="CHEBI:57453"/>
        <dbReference type="EC" id="2.1.2.1"/>
    </reaction>
</comment>
<comment type="cofactor">
    <cofactor evidence="1">
        <name>pyridoxal 5'-phosphate</name>
        <dbReference type="ChEBI" id="CHEBI:597326"/>
    </cofactor>
</comment>
<comment type="pathway">
    <text evidence="1">One-carbon metabolism; tetrahydrofolate interconversion.</text>
</comment>
<comment type="pathway">
    <text evidence="1">Amino-acid biosynthesis; glycine biosynthesis; glycine from L-serine: step 1/1.</text>
</comment>
<comment type="subunit">
    <text evidence="1">Homodimer.</text>
</comment>
<comment type="subcellular location">
    <subcellularLocation>
        <location evidence="1">Cytoplasm</location>
    </subcellularLocation>
</comment>
<comment type="similarity">
    <text evidence="1">Belongs to the SHMT family.</text>
</comment>
<comment type="sequence caution" evidence="2">
    <conflict type="erroneous initiation">
        <sequence resource="EMBL-CDS" id="AAO29584"/>
    </conflict>
</comment>
<protein>
    <recommendedName>
        <fullName evidence="1">Serine hydroxymethyltransferase</fullName>
        <shortName evidence="1">SHMT</shortName>
        <shortName evidence="1">Serine methylase</shortName>
        <ecNumber evidence="1">2.1.2.1</ecNumber>
    </recommendedName>
</protein>
<proteinExistence type="inferred from homology"/>
<evidence type="ECO:0000255" key="1">
    <source>
        <dbReference type="HAMAP-Rule" id="MF_00051"/>
    </source>
</evidence>
<evidence type="ECO:0000305" key="2"/>
<gene>
    <name evidence="1" type="primary">glyA</name>
    <name type="ordered locus">PD_1750</name>
</gene>
<feature type="chain" id="PRO_0000113704" description="Serine hydroxymethyltransferase">
    <location>
        <begin position="1"/>
        <end position="417"/>
    </location>
</feature>
<feature type="binding site" evidence="1">
    <location>
        <position position="121"/>
    </location>
    <ligand>
        <name>(6S)-5,6,7,8-tetrahydrofolate</name>
        <dbReference type="ChEBI" id="CHEBI:57453"/>
    </ligand>
</feature>
<feature type="binding site" evidence="1">
    <location>
        <begin position="125"/>
        <end position="127"/>
    </location>
    <ligand>
        <name>(6S)-5,6,7,8-tetrahydrofolate</name>
        <dbReference type="ChEBI" id="CHEBI:57453"/>
    </ligand>
</feature>
<feature type="binding site" evidence="1">
    <location>
        <begin position="355"/>
        <end position="357"/>
    </location>
    <ligand>
        <name>(6S)-5,6,7,8-tetrahydrofolate</name>
        <dbReference type="ChEBI" id="CHEBI:57453"/>
    </ligand>
</feature>
<feature type="site" description="Plays an important role in substrate specificity" evidence="1">
    <location>
        <position position="228"/>
    </location>
</feature>
<feature type="modified residue" description="N6-(pyridoxal phosphate)lysine" evidence="1">
    <location>
        <position position="229"/>
    </location>
</feature>
<reference key="1">
    <citation type="journal article" date="2003" name="J. Bacteriol.">
        <title>Comparative analyses of the complete genome sequences of Pierce's disease and citrus variegated chlorosis strains of Xylella fastidiosa.</title>
        <authorList>
            <person name="Van Sluys M.A."/>
            <person name="de Oliveira M.C."/>
            <person name="Monteiro-Vitorello C.B."/>
            <person name="Miyaki C.Y."/>
            <person name="Furlan L.R."/>
            <person name="Camargo L.E.A."/>
            <person name="da Silva A.C.R."/>
            <person name="Moon D.H."/>
            <person name="Takita M.A."/>
            <person name="Lemos E.G.M."/>
            <person name="Machado M.A."/>
            <person name="Ferro M.I.T."/>
            <person name="da Silva F.R."/>
            <person name="Goldman M.H.S."/>
            <person name="Goldman G.H."/>
            <person name="Lemos M.V.F."/>
            <person name="El-Dorry H."/>
            <person name="Tsai S.M."/>
            <person name="Carrer H."/>
            <person name="Carraro D.M."/>
            <person name="de Oliveira R.C."/>
            <person name="Nunes L.R."/>
            <person name="Siqueira W.J."/>
            <person name="Coutinho L.L."/>
            <person name="Kimura E.T."/>
            <person name="Ferro E.S."/>
            <person name="Harakava R."/>
            <person name="Kuramae E.E."/>
            <person name="Marino C.L."/>
            <person name="Giglioti E."/>
            <person name="Abreu I.L."/>
            <person name="Alves L.M.C."/>
            <person name="do Amaral A.M."/>
            <person name="Baia G.S."/>
            <person name="Blanco S.R."/>
            <person name="Brito M.S."/>
            <person name="Cannavan F.S."/>
            <person name="Celestino A.V."/>
            <person name="da Cunha A.F."/>
            <person name="Fenille R.C."/>
            <person name="Ferro J.A."/>
            <person name="Formighieri E.F."/>
            <person name="Kishi L.T."/>
            <person name="Leoni S.G."/>
            <person name="Oliveira A.R."/>
            <person name="Rosa V.E. Jr."/>
            <person name="Sassaki F.T."/>
            <person name="Sena J.A.D."/>
            <person name="de Souza A.A."/>
            <person name="Truffi D."/>
            <person name="Tsukumo F."/>
            <person name="Yanai G.M."/>
            <person name="Zaros L.G."/>
            <person name="Civerolo E.L."/>
            <person name="Simpson A.J.G."/>
            <person name="Almeida N.F. Jr."/>
            <person name="Setubal J.C."/>
            <person name="Kitajima J.P."/>
        </authorList>
    </citation>
    <scope>NUCLEOTIDE SEQUENCE [LARGE SCALE GENOMIC DNA]</scope>
    <source>
        <strain>Temecula1 / ATCC 700964</strain>
    </source>
</reference>
<dbReference type="EC" id="2.1.2.1" evidence="1"/>
<dbReference type="EMBL" id="AE009442">
    <property type="protein sequence ID" value="AAO29584.1"/>
    <property type="status" value="ALT_INIT"/>
    <property type="molecule type" value="Genomic_DNA"/>
</dbReference>
<dbReference type="RefSeq" id="WP_012382734.1">
    <property type="nucleotide sequence ID" value="NC_004556.1"/>
</dbReference>
<dbReference type="SMR" id="Q87AS2"/>
<dbReference type="GeneID" id="93905596"/>
<dbReference type="KEGG" id="xft:PD_1750"/>
<dbReference type="HOGENOM" id="CLU_022477_2_1_6"/>
<dbReference type="UniPathway" id="UPA00193"/>
<dbReference type="UniPathway" id="UPA00288">
    <property type="reaction ID" value="UER01023"/>
</dbReference>
<dbReference type="Proteomes" id="UP000002516">
    <property type="component" value="Chromosome"/>
</dbReference>
<dbReference type="GO" id="GO:0005829">
    <property type="term" value="C:cytosol"/>
    <property type="evidence" value="ECO:0007669"/>
    <property type="project" value="TreeGrafter"/>
</dbReference>
<dbReference type="GO" id="GO:0004372">
    <property type="term" value="F:glycine hydroxymethyltransferase activity"/>
    <property type="evidence" value="ECO:0007669"/>
    <property type="project" value="UniProtKB-UniRule"/>
</dbReference>
<dbReference type="GO" id="GO:0030170">
    <property type="term" value="F:pyridoxal phosphate binding"/>
    <property type="evidence" value="ECO:0007669"/>
    <property type="project" value="UniProtKB-UniRule"/>
</dbReference>
<dbReference type="GO" id="GO:0019264">
    <property type="term" value="P:glycine biosynthetic process from serine"/>
    <property type="evidence" value="ECO:0007669"/>
    <property type="project" value="UniProtKB-UniRule"/>
</dbReference>
<dbReference type="GO" id="GO:0035999">
    <property type="term" value="P:tetrahydrofolate interconversion"/>
    <property type="evidence" value="ECO:0007669"/>
    <property type="project" value="UniProtKB-UniRule"/>
</dbReference>
<dbReference type="CDD" id="cd00378">
    <property type="entry name" value="SHMT"/>
    <property type="match status" value="1"/>
</dbReference>
<dbReference type="FunFam" id="3.40.640.10:FF:000001">
    <property type="entry name" value="Serine hydroxymethyltransferase"/>
    <property type="match status" value="1"/>
</dbReference>
<dbReference type="FunFam" id="3.90.1150.10:FF:000003">
    <property type="entry name" value="Serine hydroxymethyltransferase"/>
    <property type="match status" value="1"/>
</dbReference>
<dbReference type="Gene3D" id="3.90.1150.10">
    <property type="entry name" value="Aspartate Aminotransferase, domain 1"/>
    <property type="match status" value="1"/>
</dbReference>
<dbReference type="Gene3D" id="3.40.640.10">
    <property type="entry name" value="Type I PLP-dependent aspartate aminotransferase-like (Major domain)"/>
    <property type="match status" value="1"/>
</dbReference>
<dbReference type="HAMAP" id="MF_00051">
    <property type="entry name" value="SHMT"/>
    <property type="match status" value="1"/>
</dbReference>
<dbReference type="InterPro" id="IPR015424">
    <property type="entry name" value="PyrdxlP-dep_Trfase"/>
</dbReference>
<dbReference type="InterPro" id="IPR015421">
    <property type="entry name" value="PyrdxlP-dep_Trfase_major"/>
</dbReference>
<dbReference type="InterPro" id="IPR015422">
    <property type="entry name" value="PyrdxlP-dep_Trfase_small"/>
</dbReference>
<dbReference type="InterPro" id="IPR001085">
    <property type="entry name" value="Ser_HO-MeTrfase"/>
</dbReference>
<dbReference type="InterPro" id="IPR049943">
    <property type="entry name" value="Ser_HO-MeTrfase-like"/>
</dbReference>
<dbReference type="InterPro" id="IPR019798">
    <property type="entry name" value="Ser_HO-MeTrfase_PLP_BS"/>
</dbReference>
<dbReference type="InterPro" id="IPR039429">
    <property type="entry name" value="SHMT-like_dom"/>
</dbReference>
<dbReference type="NCBIfam" id="NF000586">
    <property type="entry name" value="PRK00011.1"/>
    <property type="match status" value="1"/>
</dbReference>
<dbReference type="PANTHER" id="PTHR11680">
    <property type="entry name" value="SERINE HYDROXYMETHYLTRANSFERASE"/>
    <property type="match status" value="1"/>
</dbReference>
<dbReference type="PANTHER" id="PTHR11680:SF50">
    <property type="entry name" value="SERINE HYDROXYMETHYLTRANSFERASE"/>
    <property type="match status" value="1"/>
</dbReference>
<dbReference type="Pfam" id="PF00464">
    <property type="entry name" value="SHMT"/>
    <property type="match status" value="1"/>
</dbReference>
<dbReference type="PIRSF" id="PIRSF000412">
    <property type="entry name" value="SHMT"/>
    <property type="match status" value="1"/>
</dbReference>
<dbReference type="SUPFAM" id="SSF53383">
    <property type="entry name" value="PLP-dependent transferases"/>
    <property type="match status" value="1"/>
</dbReference>
<dbReference type="PROSITE" id="PS00096">
    <property type="entry name" value="SHMT"/>
    <property type="match status" value="1"/>
</dbReference>
<name>GLYA_XYLFT</name>